<comment type="function">
    <text evidence="1">Involved in inositol deacylation of GPI-anchored proteins which plays important roles in the quality control and ER-associated degradation of GPI-anchored proteins.</text>
</comment>
<comment type="subcellular location">
    <subcellularLocation>
        <location evidence="1">Endoplasmic reticulum membrane</location>
        <topology evidence="1">Multi-pass membrane protein</topology>
    </subcellularLocation>
</comment>
<comment type="similarity">
    <text evidence="3">Belongs to the GPI inositol-deacylase family.</text>
</comment>
<evidence type="ECO:0000250" key="1"/>
<evidence type="ECO:0000255" key="2"/>
<evidence type="ECO:0000305" key="3"/>
<accession>Q6BRG1</accession>
<sequence length="1032" mass="117343">MDSKSRGKSRLNRSILTLVSFFGLVLFYLTWYLYTRGLTGADSPGCRIVYMGPSYARITAFDESHTKFASKYSLYLYREQGRDPLPDENEGFKHLGGIPILFIPGNAGSYRQVRSIAAETSDIYFDHYLDQPDGLNPNAKNYDFFTADFNEDFTAFHGRTLLDQAEYLNEAIKFILGLYANSEHPPRSVVVLGHSMGGVVSRVMVSLPNYIPDSINTIITLASPHAAAPLTFDGDILKIYSAVDRFWFQGYDNKETDNTIAKIAKERLSKISLISITGGLLDSILPADYTTLGYLVPPTNGFTVYTTGIPGVWTPIDHLAIVWCAQLRRRVSNALLEIANFDSPDKTYSLEKRMEIMRKNFLSGFEDYTSQDKVAYDKPADHILLKADSQQINFVQEGQKLKVTPGKMPSPLNVFRLPSPKVSKVQFSLLSSMDIGELKSDNNEGYTQPTLLLCNTMDAIKEDANIIDFTNKETTEIVMFKCIDVRDDSNMIPRSAVGTYSLSESSIGGDKSPFYAIQYNSTILKQYDTVIVTGSLGMESNDNENFLLAELSDYNSSQFNIHEDLFSLMTRGAKFSLPLDKPLSMNIKIPGAWSSILAYKLKVSWPEDRETTEYIPVFRTFIRQWSNEPYEVKWHVNIEANNQVLLNMHGIAPYTPFKVKSKEEYGLNIEIWTDSIPDKSLTTIRLRIDLLNSLRLLVLRYRLATISFCVSIILLALVFQVKHYKETNKFPTFLYGLSCICSPWVFGSILFTLSILTPIMSIKPLQKFLNVIDPVVLQDSNEINLSLTDEFKLNSFFLGLEEKSLWFIGPVFFVMGLGIVSLTFYSLLVAGNVIASISRVLLKRLKLSQTEKKQPNPGKLWANRRIIGVLFVLLVIPIYMPYQFAYVVSCIIQSIQVIKILVADKTNKSILNYHLSLLMLMLWVLPINVPILVVFVHNMTINWTTPFSSHHNFLAILPVILLMERYSNSRTLPKMSQTKYKVTQAFLAYYVFYCLVYGIRHTYWIHHLFNLLCCWLLVLHYDAQDDTSDHVQ</sequence>
<protein>
    <recommendedName>
        <fullName>GPI inositol-deacylase</fullName>
        <ecNumber>3.1.-.-</ecNumber>
    </recommendedName>
</protein>
<name>BST1_DEBHA</name>
<gene>
    <name type="primary">BST1</name>
    <name type="ordered locus">DEHA2D16632g</name>
</gene>
<feature type="chain" id="PRO_0000277637" description="GPI inositol-deacylase">
    <location>
        <begin position="1"/>
        <end position="1032"/>
    </location>
</feature>
<feature type="transmembrane region" description="Helical" evidence="2">
    <location>
        <begin position="15"/>
        <end position="35"/>
    </location>
</feature>
<feature type="transmembrane region" description="Helical" evidence="2">
    <location>
        <begin position="703"/>
        <end position="723"/>
    </location>
</feature>
<feature type="transmembrane region" description="Helical" evidence="2">
    <location>
        <begin position="740"/>
        <end position="760"/>
    </location>
</feature>
<feature type="transmembrane region" description="Helical" evidence="2">
    <location>
        <begin position="805"/>
        <end position="825"/>
    </location>
</feature>
<feature type="transmembrane region" description="Helical" evidence="2">
    <location>
        <begin position="861"/>
        <end position="880"/>
    </location>
</feature>
<feature type="transmembrane region" description="Helical" evidence="2">
    <location>
        <begin position="884"/>
        <end position="903"/>
    </location>
</feature>
<feature type="transmembrane region" description="Helical" evidence="2">
    <location>
        <begin position="916"/>
        <end position="936"/>
    </location>
</feature>
<feature type="transmembrane region" description="Helical" evidence="2">
    <location>
        <begin position="943"/>
        <end position="963"/>
    </location>
</feature>
<feature type="transmembrane region" description="Helical" evidence="2">
    <location>
        <begin position="985"/>
        <end position="1005"/>
    </location>
</feature>
<feature type="active site" evidence="1">
    <location>
        <position position="195"/>
    </location>
</feature>
<feature type="glycosylation site" description="N-linked (GlcNAc...) asparagine" evidence="2">
    <location>
        <position position="12"/>
    </location>
</feature>
<feature type="glycosylation site" description="N-linked (GlcNAc...) asparagine" evidence="2">
    <location>
        <position position="520"/>
    </location>
</feature>
<feature type="glycosylation site" description="N-linked (GlcNAc...) asparagine" evidence="2">
    <location>
        <position position="555"/>
    </location>
</feature>
<feature type="glycosylation site" description="N-linked (GlcNAc...) asparagine" evidence="2">
    <location>
        <position position="784"/>
    </location>
</feature>
<feature type="glycosylation site" description="N-linked (GlcNAc...) asparagine" evidence="2">
    <location>
        <position position="907"/>
    </location>
</feature>
<feature type="glycosylation site" description="N-linked (GlcNAc...) asparagine" evidence="2">
    <location>
        <position position="938"/>
    </location>
</feature>
<feature type="glycosylation site" description="N-linked (GlcNAc...) asparagine" evidence="2">
    <location>
        <position position="942"/>
    </location>
</feature>
<proteinExistence type="inferred from homology"/>
<keyword id="KW-0256">Endoplasmic reticulum</keyword>
<keyword id="KW-0325">Glycoprotein</keyword>
<keyword id="KW-0378">Hydrolase</keyword>
<keyword id="KW-0472">Membrane</keyword>
<keyword id="KW-0653">Protein transport</keyword>
<keyword id="KW-1185">Reference proteome</keyword>
<keyword id="KW-0812">Transmembrane</keyword>
<keyword id="KW-1133">Transmembrane helix</keyword>
<keyword id="KW-0813">Transport</keyword>
<reference key="1">
    <citation type="journal article" date="2004" name="Nature">
        <title>Genome evolution in yeasts.</title>
        <authorList>
            <person name="Dujon B."/>
            <person name="Sherman D."/>
            <person name="Fischer G."/>
            <person name="Durrens P."/>
            <person name="Casaregola S."/>
            <person name="Lafontaine I."/>
            <person name="de Montigny J."/>
            <person name="Marck C."/>
            <person name="Neuveglise C."/>
            <person name="Talla E."/>
            <person name="Goffard N."/>
            <person name="Frangeul L."/>
            <person name="Aigle M."/>
            <person name="Anthouard V."/>
            <person name="Babour A."/>
            <person name="Barbe V."/>
            <person name="Barnay S."/>
            <person name="Blanchin S."/>
            <person name="Beckerich J.-M."/>
            <person name="Beyne E."/>
            <person name="Bleykasten C."/>
            <person name="Boisrame A."/>
            <person name="Boyer J."/>
            <person name="Cattolico L."/>
            <person name="Confanioleri F."/>
            <person name="de Daruvar A."/>
            <person name="Despons L."/>
            <person name="Fabre E."/>
            <person name="Fairhead C."/>
            <person name="Ferry-Dumazet H."/>
            <person name="Groppi A."/>
            <person name="Hantraye F."/>
            <person name="Hennequin C."/>
            <person name="Jauniaux N."/>
            <person name="Joyet P."/>
            <person name="Kachouri R."/>
            <person name="Kerrest A."/>
            <person name="Koszul R."/>
            <person name="Lemaire M."/>
            <person name="Lesur I."/>
            <person name="Ma L."/>
            <person name="Muller H."/>
            <person name="Nicaud J.-M."/>
            <person name="Nikolski M."/>
            <person name="Oztas S."/>
            <person name="Ozier-Kalogeropoulos O."/>
            <person name="Pellenz S."/>
            <person name="Potier S."/>
            <person name="Richard G.-F."/>
            <person name="Straub M.-L."/>
            <person name="Suleau A."/>
            <person name="Swennen D."/>
            <person name="Tekaia F."/>
            <person name="Wesolowski-Louvel M."/>
            <person name="Westhof E."/>
            <person name="Wirth B."/>
            <person name="Zeniou-Meyer M."/>
            <person name="Zivanovic Y."/>
            <person name="Bolotin-Fukuhara M."/>
            <person name="Thierry A."/>
            <person name="Bouchier C."/>
            <person name="Caudron B."/>
            <person name="Scarpelli C."/>
            <person name="Gaillardin C."/>
            <person name="Weissenbach J."/>
            <person name="Wincker P."/>
            <person name="Souciet J.-L."/>
        </authorList>
    </citation>
    <scope>NUCLEOTIDE SEQUENCE [LARGE SCALE GENOMIC DNA]</scope>
    <source>
        <strain>ATCC 36239 / CBS 767 / BCRC 21394 / JCM 1990 / NBRC 0083 / IGC 2968</strain>
    </source>
</reference>
<organism>
    <name type="scientific">Debaryomyces hansenii (strain ATCC 36239 / CBS 767 / BCRC 21394 / JCM 1990 / NBRC 0083 / IGC 2968)</name>
    <name type="common">Yeast</name>
    <name type="synonym">Torulaspora hansenii</name>
    <dbReference type="NCBI Taxonomy" id="284592"/>
    <lineage>
        <taxon>Eukaryota</taxon>
        <taxon>Fungi</taxon>
        <taxon>Dikarya</taxon>
        <taxon>Ascomycota</taxon>
        <taxon>Saccharomycotina</taxon>
        <taxon>Pichiomycetes</taxon>
        <taxon>Debaryomycetaceae</taxon>
        <taxon>Debaryomyces</taxon>
    </lineage>
</organism>
<dbReference type="EC" id="3.1.-.-"/>
<dbReference type="EMBL" id="CR382136">
    <property type="protein sequence ID" value="CAG87380.2"/>
    <property type="molecule type" value="Genomic_DNA"/>
</dbReference>
<dbReference type="RefSeq" id="XP_459209.2">
    <property type="nucleotide sequence ID" value="XM_459209.1"/>
</dbReference>
<dbReference type="SMR" id="Q6BRG1"/>
<dbReference type="FunCoup" id="Q6BRG1">
    <property type="interactions" value="56"/>
</dbReference>
<dbReference type="STRING" id="284592.Q6BRG1"/>
<dbReference type="ESTHER" id="debha-q6brg1">
    <property type="family name" value="PGAP1"/>
</dbReference>
<dbReference type="GlyCosmos" id="Q6BRG1">
    <property type="glycosylation" value="7 sites, No reported glycans"/>
</dbReference>
<dbReference type="GeneID" id="2901194"/>
<dbReference type="KEGG" id="dha:DEHA2D16632g"/>
<dbReference type="VEuPathDB" id="FungiDB:DEHA2D16632g"/>
<dbReference type="eggNOG" id="KOG3724">
    <property type="taxonomic scope" value="Eukaryota"/>
</dbReference>
<dbReference type="HOGENOM" id="CLU_006103_0_0_1"/>
<dbReference type="InParanoid" id="Q6BRG1"/>
<dbReference type="OMA" id="WVRNLAV"/>
<dbReference type="OrthoDB" id="348976at2759"/>
<dbReference type="Proteomes" id="UP000000599">
    <property type="component" value="Chromosome D"/>
</dbReference>
<dbReference type="GO" id="GO:0005789">
    <property type="term" value="C:endoplasmic reticulum membrane"/>
    <property type="evidence" value="ECO:0007669"/>
    <property type="project" value="UniProtKB-SubCell"/>
</dbReference>
<dbReference type="GO" id="GO:0050185">
    <property type="term" value="F:phosphatidylinositol deacylase activity"/>
    <property type="evidence" value="ECO:0007669"/>
    <property type="project" value="TreeGrafter"/>
</dbReference>
<dbReference type="GO" id="GO:0006888">
    <property type="term" value="P:endoplasmic reticulum to Golgi vesicle-mediated transport"/>
    <property type="evidence" value="ECO:0007669"/>
    <property type="project" value="TreeGrafter"/>
</dbReference>
<dbReference type="GO" id="GO:0006505">
    <property type="term" value="P:GPI anchor metabolic process"/>
    <property type="evidence" value="ECO:0007669"/>
    <property type="project" value="TreeGrafter"/>
</dbReference>
<dbReference type="GO" id="GO:0015031">
    <property type="term" value="P:protein transport"/>
    <property type="evidence" value="ECO:0007669"/>
    <property type="project" value="UniProtKB-KW"/>
</dbReference>
<dbReference type="Gene3D" id="3.40.50.1820">
    <property type="entry name" value="alpha/beta hydrolase"/>
    <property type="match status" value="1"/>
</dbReference>
<dbReference type="InterPro" id="IPR029058">
    <property type="entry name" value="AB_hydrolase_fold"/>
</dbReference>
<dbReference type="InterPro" id="IPR012908">
    <property type="entry name" value="PGAP1-ab_dom-like"/>
</dbReference>
<dbReference type="InterPro" id="IPR039529">
    <property type="entry name" value="PGAP1/BST1"/>
</dbReference>
<dbReference type="InterPro" id="IPR056824">
    <property type="entry name" value="PGAP1_TMD"/>
</dbReference>
<dbReference type="PANTHER" id="PTHR15495:SF7">
    <property type="entry name" value="GPI INOSITOL-DEACYLASE"/>
    <property type="match status" value="1"/>
</dbReference>
<dbReference type="PANTHER" id="PTHR15495">
    <property type="entry name" value="NEGATIVE REGULATOR OF VESICLE FORMATION-RELATED"/>
    <property type="match status" value="1"/>
</dbReference>
<dbReference type="Pfam" id="PF07819">
    <property type="entry name" value="PGAP1"/>
    <property type="match status" value="1"/>
</dbReference>
<dbReference type="Pfam" id="PF25141">
    <property type="entry name" value="PGAP1_2nd"/>
    <property type="match status" value="1"/>
</dbReference>
<dbReference type="Pfam" id="PF25140">
    <property type="entry name" value="PGAP1_TMD"/>
    <property type="match status" value="1"/>
</dbReference>
<dbReference type="SUPFAM" id="SSF53474">
    <property type="entry name" value="alpha/beta-Hydrolases"/>
    <property type="match status" value="1"/>
</dbReference>
<dbReference type="PROSITE" id="PS00120">
    <property type="entry name" value="LIPASE_SER"/>
    <property type="match status" value="1"/>
</dbReference>